<feature type="signal peptide" evidence="1">
    <location>
        <begin position="1"/>
        <end position="18"/>
    </location>
</feature>
<feature type="chain" id="PRO_5007646702" description="Glucan endo-1,3-beta-glucosidase" evidence="1">
    <location>
        <begin position="19"/>
        <end position="270"/>
    </location>
</feature>
<feature type="domain" description="GH16" evidence="2">
    <location>
        <begin position="22"/>
        <end position="270"/>
    </location>
</feature>
<feature type="active site" description="Nucleophile" evidence="2">
    <location>
        <position position="137"/>
    </location>
</feature>
<feature type="active site" description="Proton donor" evidence="2">
    <location>
        <position position="142"/>
    </location>
</feature>
<evidence type="ECO:0000255" key="1"/>
<evidence type="ECO:0000255" key="2">
    <source>
        <dbReference type="PROSITE-ProRule" id="PRU01098"/>
    </source>
</evidence>
<evidence type="ECO:0000269" key="3">
    <source>
    </source>
</evidence>
<evidence type="ECO:0000303" key="4">
    <source>
    </source>
</evidence>
<evidence type="ECO:0000305" key="5"/>
<evidence type="ECO:0000312" key="6">
    <source>
        <dbReference type="EMBL" id="ACD93221.1"/>
    </source>
</evidence>
<evidence type="ECO:0000312" key="7">
    <source>
        <dbReference type="EMBL" id="ACV50413.1"/>
    </source>
</evidence>
<proteinExistence type="evidence at protein level"/>
<reference evidence="6" key="1">
    <citation type="journal article" date="2010" name="Comp. Biochem. Physiol.">
        <title>Molecular and biochemical characterizations of a novel arthropod endo-beta-1,3-glucanase from the Antarctic springtail, Cryptopygus antarcticus, horizontally acquired from bacteria.</title>
        <authorList>
            <person name="Song J.M."/>
            <person name="Nam K."/>
            <person name="Sun Y.U."/>
            <person name="Kang M.H."/>
            <person name="Kim C.G."/>
            <person name="Kwon S.T."/>
            <person name="Lee J."/>
            <person name="Lee Y.H."/>
        </authorList>
    </citation>
    <scope>NUCLEOTIDE SEQUENCE [GENOMIC DNA / MRNA]</scope>
    <scope>FUNCTION</scope>
    <scope>CATALYTIC ACTIVITY</scope>
    <scope>ACTIVITY REGULATION</scope>
    <scope>BIOPHYSICOCHEMICAL PROPERTIES</scope>
    <scope>3D-STRUCTURE MODELING</scope>
</reference>
<dbReference type="EC" id="3.2.1.39" evidence="3 7"/>
<dbReference type="EMBL" id="EU559744">
    <property type="protein sequence ID" value="ACD93221.1"/>
    <property type="molecule type" value="Genomic_DNA"/>
</dbReference>
<dbReference type="EMBL" id="FJ648734">
    <property type="protein sequence ID" value="ACV50413.1"/>
    <property type="molecule type" value="mRNA"/>
</dbReference>
<dbReference type="SMR" id="C1IE32"/>
<dbReference type="CAZy" id="GH16">
    <property type="family name" value="Glycoside Hydrolase Family 16"/>
</dbReference>
<dbReference type="BRENDA" id="3.2.1.39">
    <property type="organism ID" value="11159"/>
</dbReference>
<dbReference type="GO" id="GO:0005576">
    <property type="term" value="C:extracellular region"/>
    <property type="evidence" value="ECO:0007669"/>
    <property type="project" value="UniProtKB-SubCell"/>
</dbReference>
<dbReference type="GO" id="GO:0042973">
    <property type="term" value="F:glucan endo-1,3-beta-D-glucosidase activity"/>
    <property type="evidence" value="ECO:0000314"/>
    <property type="project" value="UniProtKB"/>
</dbReference>
<dbReference type="GO" id="GO:0005975">
    <property type="term" value="P:carbohydrate metabolic process"/>
    <property type="evidence" value="ECO:0007669"/>
    <property type="project" value="InterPro"/>
</dbReference>
<dbReference type="CDD" id="cd08023">
    <property type="entry name" value="GH16_laminarinase_like"/>
    <property type="match status" value="1"/>
</dbReference>
<dbReference type="Gene3D" id="2.60.120.200">
    <property type="match status" value="1"/>
</dbReference>
<dbReference type="InterPro" id="IPR013320">
    <property type="entry name" value="ConA-like_dom_sf"/>
</dbReference>
<dbReference type="InterPro" id="IPR000757">
    <property type="entry name" value="GH16"/>
</dbReference>
<dbReference type="InterPro" id="IPR050546">
    <property type="entry name" value="Glycosyl_Hydrlase_16"/>
</dbReference>
<dbReference type="PANTHER" id="PTHR10963:SF55">
    <property type="entry name" value="GLYCOSIDE HYDROLASE FAMILY 16 PROTEIN"/>
    <property type="match status" value="1"/>
</dbReference>
<dbReference type="PANTHER" id="PTHR10963">
    <property type="entry name" value="GLYCOSYL HYDROLASE-RELATED"/>
    <property type="match status" value="1"/>
</dbReference>
<dbReference type="Pfam" id="PF00722">
    <property type="entry name" value="Glyco_hydro_16"/>
    <property type="match status" value="1"/>
</dbReference>
<dbReference type="SUPFAM" id="SSF49899">
    <property type="entry name" value="Concanavalin A-like lectins/glucanases"/>
    <property type="match status" value="1"/>
</dbReference>
<dbReference type="PROSITE" id="PS51762">
    <property type="entry name" value="GH16_2"/>
    <property type="match status" value="1"/>
</dbReference>
<organism evidence="6">
    <name type="scientific">Cryptopygus antarcticus</name>
    <name type="common">Antarctic springtail</name>
    <dbReference type="NCBI Taxonomy" id="187623"/>
    <lineage>
        <taxon>Eukaryota</taxon>
        <taxon>Metazoa</taxon>
        <taxon>Ecdysozoa</taxon>
        <taxon>Arthropoda</taxon>
        <taxon>Hexapoda</taxon>
        <taxon>Collembola</taxon>
        <taxon>Entomobryomorpha</taxon>
        <taxon>Isotomoidea</taxon>
        <taxon>Isotomidae</taxon>
        <taxon>Anurophorinae</taxon>
        <taxon>Cryptopygus</taxon>
        <taxon>Cryptopygus antarcticus complex</taxon>
    </lineage>
</organism>
<accession>C1IE32</accession>
<keyword id="KW-0326">Glycosidase</keyword>
<keyword id="KW-0378">Hydrolase</keyword>
<keyword id="KW-0964">Secreted</keyword>
<keyword id="KW-0732">Signal</keyword>
<sequence>MNAFTFPLLLAFCAFAHGAWVLDWEDEFNGGNLADRWNFELGCNGWGNNELQCYTDNRGANARQEDGKLVISAVREWWGDGVNPDKEFTSARMTTKANWLHGKFEMRARLPKGKHLWPAFWMMPQNSEYGGWPRSGEIDITEYRGQRPQQILGTLHFGAAPDNKGDVGTGERDFPIDFSADFHTFGLDWSPDSMQWLLDDQVYHTESLQRNFWDGVYNQNGSPFDKNFFIILNLAVGGNFFGGEPFDPSESDGWAKNTFEVEYVKKWTWN</sequence>
<protein>
    <recommendedName>
        <fullName evidence="5">Glucan endo-1,3-beta-glucosidase</fullName>
        <ecNumber evidence="3 7">3.2.1.39</ecNumber>
    </recommendedName>
    <alternativeName>
        <fullName evidence="5">(1-&gt;3)-beta-glucan endohydrolase</fullName>
    </alternativeName>
    <alternativeName>
        <fullName evidence="5">(1-&gt;3)-beta-glucanase</fullName>
    </alternativeName>
    <alternativeName>
        <fullName evidence="4">CaLam</fullName>
    </alternativeName>
    <alternativeName>
        <fullName evidence="4 7">Endo-beta-1,3-glucanase</fullName>
    </alternativeName>
    <alternativeName>
        <fullName evidence="4">Laminarinase</fullName>
    </alternativeName>
</protein>
<name>E13B_CRYAT</name>
<comment type="function">
    <text evidence="3">Hydrolyzes laminarin majorily to glucose (G1), laminaribiose (L2), laminaritriose (L3), laminaritetraose (L4) and laminaripentaose (L5). Hydrolyzes laminarioligosaccharides L3, L4, L5 and laminarihexaose (L6) to G1, L2 and L3. Hardly hydrolyzes L2. Does not hydrolyze lichenan, pustulan, carboxymethyl cellulose, locust bean gum or soluble starch.</text>
</comment>
<comment type="catalytic activity">
    <reaction evidence="3">
        <text>Hydrolysis of (1-&gt;3)-beta-D-glucosidic linkages in (1-&gt;3)-beta-D-glucans.</text>
        <dbReference type="EC" id="3.2.1.39"/>
    </reaction>
</comment>
<comment type="activity regulation">
    <text evidence="3">Ca(2+) does not affect the enzyme activity nor the thermostability. Other cations, such as Mg(2+), Mn(2+), Cu(2+), Zn(2+), Ag(+) or Hg(2+) do not cause any serious adverse effect on the activity. Also no significant change in the activity in response to the addition of 1 mM EDTA.</text>
</comment>
<comment type="biophysicochemical properties">
    <kinetics>
        <KM evidence="3">9.98 mg/ml for 1% laminarin (at pH 6.0 and 50 degrees Celsius)</KM>
        <Vmax evidence="3">32.2 umol/min/mg enzyme with 1% laminarin as substrate (at pH 6.0 and 50 degrees Celsius)</Vmax>
    </kinetics>
    <phDependence>
        <text evidence="3">Optimum pH is 6.0. More than 80% of its maximal activity is maintained at pH 5.5-6.5.</text>
    </phDependence>
    <temperatureDependence>
        <text evidence="3">Optimum temperature is 50 degrees Celsius. Retains 20% of the maximal activity after incubation at 60 degrees Celsius for 30 minutes. Retains approximately 15% of the maximal activity at the temperature below 15 degrees Celsius.</text>
    </temperatureDependence>
</comment>
<comment type="subcellular location">
    <subcellularLocation>
        <location evidence="5">Secreted</location>
    </subcellularLocation>
</comment>
<comment type="similarity">
    <text evidence="2">Belongs to the glycosyl hydrolase 16 family.</text>
</comment>